<name>T2FA_BOVIN</name>
<gene>
    <name type="primary">GTF2F1</name>
</gene>
<dbReference type="EMBL" id="BT020716">
    <property type="protein sequence ID" value="AAX08733.1"/>
    <property type="molecule type" value="mRNA"/>
</dbReference>
<dbReference type="EMBL" id="BC146189">
    <property type="protein sequence ID" value="AAI46190.1"/>
    <property type="molecule type" value="mRNA"/>
</dbReference>
<dbReference type="RefSeq" id="NP_001015527.1">
    <property type="nucleotide sequence ID" value="NM_001015527.1"/>
</dbReference>
<dbReference type="SMR" id="Q5EA53"/>
<dbReference type="FunCoup" id="Q5EA53">
    <property type="interactions" value="3814"/>
</dbReference>
<dbReference type="STRING" id="9913.ENSBTAP00000027988"/>
<dbReference type="PaxDb" id="9913-ENSBTAP00000027988"/>
<dbReference type="Ensembl" id="ENSBTAT00000027988.7">
    <property type="protein sequence ID" value="ENSBTAP00000027988.5"/>
    <property type="gene ID" value="ENSBTAG00000021016.7"/>
</dbReference>
<dbReference type="GeneID" id="505702"/>
<dbReference type="KEGG" id="bta:505702"/>
<dbReference type="CTD" id="2962"/>
<dbReference type="VEuPathDB" id="HostDB:ENSBTAG00000021016"/>
<dbReference type="VGNC" id="VGNC:97277">
    <property type="gene designation" value="GTF2F1"/>
</dbReference>
<dbReference type="eggNOG" id="KOG2393">
    <property type="taxonomic scope" value="Eukaryota"/>
</dbReference>
<dbReference type="GeneTree" id="ENSGT00440000038032"/>
<dbReference type="HOGENOM" id="CLU_027572_2_0_1"/>
<dbReference type="InParanoid" id="Q5EA53"/>
<dbReference type="OMA" id="VTCGKTM"/>
<dbReference type="OrthoDB" id="76676at2759"/>
<dbReference type="TreeFam" id="TF313850"/>
<dbReference type="Reactome" id="R-BTA-112382">
    <property type="pathway name" value="Formation of RNA Pol II elongation complex"/>
</dbReference>
<dbReference type="Reactome" id="R-BTA-113418">
    <property type="pathway name" value="Formation of the Early Elongation Complex"/>
</dbReference>
<dbReference type="Reactome" id="R-BTA-674695">
    <property type="pathway name" value="RNA Polymerase II Pre-transcription Events"/>
</dbReference>
<dbReference type="Reactome" id="R-BTA-6796648">
    <property type="pathway name" value="TP53 Regulates Transcription of DNA Repair Genes"/>
</dbReference>
<dbReference type="Reactome" id="R-BTA-6803529">
    <property type="pathway name" value="FGFR2 alternative splicing"/>
</dbReference>
<dbReference type="Reactome" id="R-BTA-6807505">
    <property type="pathway name" value="RNA polymerase II transcribes snRNA genes"/>
</dbReference>
<dbReference type="Reactome" id="R-BTA-72086">
    <property type="pathway name" value="mRNA Capping"/>
</dbReference>
<dbReference type="Reactome" id="R-BTA-72163">
    <property type="pathway name" value="mRNA Splicing - Major Pathway"/>
</dbReference>
<dbReference type="Reactome" id="R-BTA-72165">
    <property type="pathway name" value="mRNA Splicing - Minor Pathway"/>
</dbReference>
<dbReference type="Reactome" id="R-BTA-72203">
    <property type="pathway name" value="Processing of Capped Intron-Containing Pre-mRNA"/>
</dbReference>
<dbReference type="Reactome" id="R-BTA-73776">
    <property type="pathway name" value="RNA Polymerase II Promoter Escape"/>
</dbReference>
<dbReference type="Reactome" id="R-BTA-73779">
    <property type="pathway name" value="RNA Polymerase II Transcription Pre-Initiation And Promoter Opening"/>
</dbReference>
<dbReference type="Reactome" id="R-BTA-75953">
    <property type="pathway name" value="RNA Polymerase II Transcription Initiation"/>
</dbReference>
<dbReference type="Reactome" id="R-BTA-75955">
    <property type="pathway name" value="RNA Polymerase II Transcription Elongation"/>
</dbReference>
<dbReference type="Reactome" id="R-BTA-76042">
    <property type="pathway name" value="RNA Polymerase II Transcription Initiation And Promoter Clearance"/>
</dbReference>
<dbReference type="Reactome" id="R-BTA-77075">
    <property type="pathway name" value="RNA Pol II CTD phosphorylation and interaction with CE"/>
</dbReference>
<dbReference type="Reactome" id="R-BTA-9018519">
    <property type="pathway name" value="Estrogen-dependent gene expression"/>
</dbReference>
<dbReference type="Proteomes" id="UP000009136">
    <property type="component" value="Chromosome 7"/>
</dbReference>
<dbReference type="Bgee" id="ENSBTAG00000021016">
    <property type="expression patterns" value="Expressed in retina and 109 other cell types or tissues"/>
</dbReference>
<dbReference type="GO" id="GO:0030054">
    <property type="term" value="C:cell junction"/>
    <property type="evidence" value="ECO:0007669"/>
    <property type="project" value="Ensembl"/>
</dbReference>
<dbReference type="GO" id="GO:0005669">
    <property type="term" value="C:transcription factor TFIID complex"/>
    <property type="evidence" value="ECO:0007669"/>
    <property type="project" value="Ensembl"/>
</dbReference>
<dbReference type="GO" id="GO:0005674">
    <property type="term" value="C:transcription factor TFIIF complex"/>
    <property type="evidence" value="ECO:0000318"/>
    <property type="project" value="GO_Central"/>
</dbReference>
<dbReference type="GO" id="GO:0003677">
    <property type="term" value="F:DNA binding"/>
    <property type="evidence" value="ECO:0007669"/>
    <property type="project" value="UniProtKB-KW"/>
</dbReference>
<dbReference type="GO" id="GO:0019211">
    <property type="term" value="F:phosphatase activator activity"/>
    <property type="evidence" value="ECO:0007669"/>
    <property type="project" value="Ensembl"/>
</dbReference>
<dbReference type="GO" id="GO:1990841">
    <property type="term" value="F:promoter-specific chromatin binding"/>
    <property type="evidence" value="ECO:0000250"/>
    <property type="project" value="UniProtKB"/>
</dbReference>
<dbReference type="GO" id="GO:0019904">
    <property type="term" value="F:protein domain specific binding"/>
    <property type="evidence" value="ECO:0007669"/>
    <property type="project" value="Ensembl"/>
</dbReference>
<dbReference type="GO" id="GO:0019903">
    <property type="term" value="F:protein phosphatase binding"/>
    <property type="evidence" value="ECO:0007669"/>
    <property type="project" value="Ensembl"/>
</dbReference>
<dbReference type="GO" id="GO:0016251">
    <property type="term" value="F:RNA polymerase II general transcription initiation factor activity"/>
    <property type="evidence" value="ECO:0000318"/>
    <property type="project" value="GO_Central"/>
</dbReference>
<dbReference type="GO" id="GO:0001096">
    <property type="term" value="F:TFIIF-class transcription factor complex binding"/>
    <property type="evidence" value="ECO:0000318"/>
    <property type="project" value="GO_Central"/>
</dbReference>
<dbReference type="GO" id="GO:0032091">
    <property type="term" value="P:negative regulation of protein binding"/>
    <property type="evidence" value="ECO:0000250"/>
    <property type="project" value="UniProtKB"/>
</dbReference>
<dbReference type="GO" id="GO:0045944">
    <property type="term" value="P:positive regulation of transcription by RNA polymerase II"/>
    <property type="evidence" value="ECO:0000250"/>
    <property type="project" value="UniProtKB"/>
</dbReference>
<dbReference type="GO" id="GO:0032968">
    <property type="term" value="P:positive regulation of transcription elongation by RNA polymerase II"/>
    <property type="evidence" value="ECO:0007669"/>
    <property type="project" value="InterPro"/>
</dbReference>
<dbReference type="GO" id="GO:0009615">
    <property type="term" value="P:response to virus"/>
    <property type="evidence" value="ECO:0007669"/>
    <property type="project" value="Ensembl"/>
</dbReference>
<dbReference type="GO" id="GO:0006368">
    <property type="term" value="P:transcription elongation by RNA polymerase II"/>
    <property type="evidence" value="ECO:0007669"/>
    <property type="project" value="Ensembl"/>
</dbReference>
<dbReference type="GO" id="GO:0006367">
    <property type="term" value="P:transcription initiation at RNA polymerase II promoter"/>
    <property type="evidence" value="ECO:0000318"/>
    <property type="project" value="GO_Central"/>
</dbReference>
<dbReference type="CDD" id="cd00240">
    <property type="entry name" value="TFIIFa"/>
    <property type="match status" value="1"/>
</dbReference>
<dbReference type="FunFam" id="1.10.10.10:FF:000290">
    <property type="entry name" value="General transcription factor IIF subunit 1"/>
    <property type="match status" value="1"/>
</dbReference>
<dbReference type="Gene3D" id="1.10.10.10">
    <property type="entry name" value="Winged helix-like DNA-binding domain superfamily/Winged helix DNA-binding domain"/>
    <property type="match status" value="1"/>
</dbReference>
<dbReference type="InterPro" id="IPR008851">
    <property type="entry name" value="TFIIF-alpha"/>
</dbReference>
<dbReference type="InterPro" id="IPR011039">
    <property type="entry name" value="TFIIF_interaction"/>
</dbReference>
<dbReference type="InterPro" id="IPR036388">
    <property type="entry name" value="WH-like_DNA-bd_sf"/>
</dbReference>
<dbReference type="InterPro" id="IPR036390">
    <property type="entry name" value="WH_DNA-bd_sf"/>
</dbReference>
<dbReference type="PANTHER" id="PTHR13011:SF0">
    <property type="entry name" value="GENERAL TRANSCRIPTION FACTOR IIF SUBUNIT 1"/>
    <property type="match status" value="1"/>
</dbReference>
<dbReference type="PANTHER" id="PTHR13011">
    <property type="entry name" value="TFIIF-ALPHA"/>
    <property type="match status" value="1"/>
</dbReference>
<dbReference type="Pfam" id="PF05793">
    <property type="entry name" value="TFIIF_alpha"/>
    <property type="match status" value="1"/>
</dbReference>
<dbReference type="SUPFAM" id="SSF50916">
    <property type="entry name" value="Rap30/74 interaction domains"/>
    <property type="match status" value="2"/>
</dbReference>
<dbReference type="SUPFAM" id="SSF46785">
    <property type="entry name" value="Winged helix' DNA-binding domain"/>
    <property type="match status" value="1"/>
</dbReference>
<comment type="function">
    <text evidence="1">TFIIF is a general transcription initiation factor that binds to RNA polymerase II and helps to recruit it to the initiation complex in collaboration with TFIIB. It promotes transcription elongation (By similarity).</text>
</comment>
<comment type="subunit">
    <text evidence="2">Heterodimer of an alpha and a beta subunit. Interacts with GTF2F2, CTDP1, TAF6/TAFII80 and URI1. Interacts with GTF2B (via C-terminus and preferentially via acetylated form); this interaction prevents binding of GTF2B to GTF2F2. Part of TBP-based Pol II pre-initiation complex (PIC), in which Pol II core assembles with general transcription factors and other specific initiation factors including GTF2E1, GTF2E2, GTF2F1, GTF2F2, TCEA1, ERCC2, ERCC3, GTF2H2, GTF2H3, GTF2H4, GTF2H5, GTF2A1, GTF2A2, GTF2B and TBP; this large multi-subunit PIC complex mediates DNA unwinding and targets Pol II core to the transcription start site where the first phosphodiester bond forms.</text>
</comment>
<comment type="subcellular location">
    <subcellularLocation>
        <location evidence="1">Nucleus</location>
    </subcellularLocation>
</comment>
<comment type="PTM">
    <text evidence="1">Phosphorylated on Ser and other residues by TAF1 and casein kinase II-like kinases.</text>
</comment>
<comment type="similarity">
    <text evidence="4">Belongs to the TFIIF alpha subunit family.</text>
</comment>
<protein>
    <recommendedName>
        <fullName>General transcription factor IIF subunit 1</fullName>
    </recommendedName>
    <alternativeName>
        <fullName>Transcription initiation factor IIF subunit alpha</fullName>
        <shortName>TFIIF-alpha</shortName>
    </alternativeName>
</protein>
<proteinExistence type="evidence at transcript level"/>
<organism>
    <name type="scientific">Bos taurus</name>
    <name type="common">Bovine</name>
    <dbReference type="NCBI Taxonomy" id="9913"/>
    <lineage>
        <taxon>Eukaryota</taxon>
        <taxon>Metazoa</taxon>
        <taxon>Chordata</taxon>
        <taxon>Craniata</taxon>
        <taxon>Vertebrata</taxon>
        <taxon>Euteleostomi</taxon>
        <taxon>Mammalia</taxon>
        <taxon>Eutheria</taxon>
        <taxon>Laurasiatheria</taxon>
        <taxon>Artiodactyla</taxon>
        <taxon>Ruminantia</taxon>
        <taxon>Pecora</taxon>
        <taxon>Bovidae</taxon>
        <taxon>Bovinae</taxon>
        <taxon>Bos</taxon>
    </lineage>
</organism>
<sequence length="517" mass="58262">MAALGPSSQNVTEYVVRVPKNTTKKYNIMAFNAADKVNLTTWNQARLERDLSNKKIYQEEEMPESGAGSEFNRKLREEARRKKYGIVLKEFRPEDQPWLLRVNGKSGRKFKGIKKGGVTENTSYYIFTQCPDGAFEAFPVHNWYNFTPLAKHRTLTAEEAEEEWERRNKVLNHFSIMQQRRLKDQDQDEEDEEKEKRSRKKASELRIHDLEDDLEMSSDDSEASGEEGGRAPKAKKKAPPSKGGRKKKKKKGSDDEAFEDSDDGDFEGQEVDYMSDGSSSSQDELEGKPKATQQEEGPKGVDEQSESSEESEEEKPPEEDKEEEEEKKAPTPQEKKRRKDSSEESDSSEESDIDSEASSALFMAKKKTPPKRERKPSGGSSRGNSRPGTPSTEAGSTSSTLRAAASKLEQGKRTSETPAAKRLRLDTGPQSLSGKSTPQPQSGKSTPSSGDVQVTEDAVRRYLTRKPMTTKDLLKKFQTKKTGLSSEQTVNVLAQILKRLNPERKMINDKMHFSLKE</sequence>
<reference key="1">
    <citation type="journal article" date="2005" name="BMC Genomics">
        <title>Characterization of 954 bovine full-CDS cDNA sequences.</title>
        <authorList>
            <person name="Harhay G.P."/>
            <person name="Sonstegard T.S."/>
            <person name="Keele J.W."/>
            <person name="Heaton M.P."/>
            <person name="Clawson M.L."/>
            <person name="Snelling W.M."/>
            <person name="Wiedmann R.T."/>
            <person name="Van Tassell C.P."/>
            <person name="Smith T.P.L."/>
        </authorList>
    </citation>
    <scope>NUCLEOTIDE SEQUENCE [LARGE SCALE MRNA]</scope>
</reference>
<reference key="2">
    <citation type="submission" date="2007-06" db="EMBL/GenBank/DDBJ databases">
        <authorList>
            <consortium name="NIH - Mammalian Gene Collection (MGC) project"/>
        </authorList>
    </citation>
    <scope>NUCLEOTIDE SEQUENCE [LARGE SCALE MRNA]</scope>
    <source>
        <strain>Hereford</strain>
        <tissue>Fetal skin</tissue>
    </source>
</reference>
<feature type="initiator methionine" description="Removed" evidence="2">
    <location>
        <position position="1"/>
    </location>
</feature>
<feature type="chain" id="PRO_0000260321" description="General transcription factor IIF subunit 1">
    <location>
        <begin position="2"/>
        <end position="517"/>
    </location>
</feature>
<feature type="region of interest" description="Disordered" evidence="3">
    <location>
        <begin position="178"/>
        <end position="458"/>
    </location>
</feature>
<feature type="compositionally biased region" description="Acidic residues" evidence="3">
    <location>
        <begin position="210"/>
        <end position="225"/>
    </location>
</feature>
<feature type="compositionally biased region" description="Basic residues" evidence="3">
    <location>
        <begin position="232"/>
        <end position="251"/>
    </location>
</feature>
<feature type="compositionally biased region" description="Acidic residues" evidence="3">
    <location>
        <begin position="255"/>
        <end position="270"/>
    </location>
</feature>
<feature type="compositionally biased region" description="Acidic residues" evidence="3">
    <location>
        <begin position="303"/>
        <end position="325"/>
    </location>
</feature>
<feature type="compositionally biased region" description="Acidic residues" evidence="3">
    <location>
        <begin position="343"/>
        <end position="355"/>
    </location>
</feature>
<feature type="compositionally biased region" description="Basic residues" evidence="3">
    <location>
        <begin position="364"/>
        <end position="374"/>
    </location>
</feature>
<feature type="compositionally biased region" description="Low complexity" evidence="3">
    <location>
        <begin position="377"/>
        <end position="391"/>
    </location>
</feature>
<feature type="compositionally biased region" description="Polar residues" evidence="3">
    <location>
        <begin position="392"/>
        <end position="401"/>
    </location>
</feature>
<feature type="compositionally biased region" description="Polar residues" evidence="3">
    <location>
        <begin position="428"/>
        <end position="452"/>
    </location>
</feature>
<feature type="modified residue" description="N-acetylalanine" evidence="2">
    <location>
        <position position="2"/>
    </location>
</feature>
<feature type="modified residue" description="Phosphothreonine" evidence="2">
    <location>
        <position position="156"/>
    </location>
</feature>
<feature type="modified residue" description="Phosphoserine" evidence="2">
    <location>
        <position position="217"/>
    </location>
</feature>
<feature type="modified residue" description="Phosphoserine" evidence="2">
    <location>
        <position position="218"/>
    </location>
</feature>
<feature type="modified residue" description="Phosphoserine" evidence="2">
    <location>
        <position position="221"/>
    </location>
</feature>
<feature type="modified residue" description="Phosphoserine" evidence="2">
    <location>
        <position position="224"/>
    </location>
</feature>
<feature type="modified residue" description="Phosphothreonine" evidence="2">
    <location>
        <position position="331"/>
    </location>
</feature>
<feature type="modified residue" description="Phosphoserine" evidence="2">
    <location>
        <position position="377"/>
    </location>
</feature>
<feature type="modified residue" description="Phosphoserine" evidence="2">
    <location>
        <position position="380"/>
    </location>
</feature>
<feature type="modified residue" description="Phosphoserine" evidence="2">
    <location>
        <position position="381"/>
    </location>
</feature>
<feature type="modified residue" description="Phosphoserine" evidence="2">
    <location>
        <position position="385"/>
    </location>
</feature>
<feature type="modified residue" description="Phosphothreonine" evidence="2">
    <location>
        <position position="389"/>
    </location>
</feature>
<feature type="modified residue" description="Phosphoserine" evidence="2">
    <location>
        <position position="391"/>
    </location>
</feature>
<feature type="modified residue" description="N6-acetyllysine" evidence="2">
    <location>
        <position position="407"/>
    </location>
</feature>
<feature type="modified residue" description="Phosphoserine" evidence="2">
    <location>
        <position position="431"/>
    </location>
</feature>
<feature type="modified residue" description="Phosphoserine" evidence="2">
    <location>
        <position position="433"/>
    </location>
</feature>
<feature type="modified residue" description="Phosphoserine" evidence="2">
    <location>
        <position position="436"/>
    </location>
</feature>
<feature type="modified residue" description="Phosphothreonine" evidence="2">
    <location>
        <position position="437"/>
    </location>
</feature>
<feature type="modified residue" description="Phosphothreonine" evidence="2">
    <location>
        <position position="446"/>
    </location>
</feature>
<feature type="modified residue" description="Phosphoserine" evidence="2">
    <location>
        <position position="449"/>
    </location>
</feature>
<accession>Q5EA53</accession>
<accession>A6H7C0</accession>
<keyword id="KW-0007">Acetylation</keyword>
<keyword id="KW-0238">DNA-binding</keyword>
<keyword id="KW-0539">Nucleus</keyword>
<keyword id="KW-0597">Phosphoprotein</keyword>
<keyword id="KW-1185">Reference proteome</keyword>
<keyword id="KW-0804">Transcription</keyword>
<keyword id="KW-0805">Transcription regulation</keyword>
<evidence type="ECO:0000250" key="1"/>
<evidence type="ECO:0000250" key="2">
    <source>
        <dbReference type="UniProtKB" id="P35269"/>
    </source>
</evidence>
<evidence type="ECO:0000256" key="3">
    <source>
        <dbReference type="SAM" id="MobiDB-lite"/>
    </source>
</evidence>
<evidence type="ECO:0000305" key="4"/>